<geneLocation type="mitochondrion"/>
<name>ATP9_YARLI</name>
<proteinExistence type="evidence at protein level"/>
<evidence type="ECO:0000250" key="1">
    <source>
        <dbReference type="UniProtKB" id="P61829"/>
    </source>
</evidence>
<evidence type="ECO:0000255" key="2"/>
<evidence type="ECO:0000269" key="3">
    <source>
    </source>
</evidence>
<evidence type="ECO:0000269" key="4">
    <source>
    </source>
</evidence>
<evidence type="ECO:0000269" key="5">
    <source>
    </source>
</evidence>
<evidence type="ECO:0000303" key="6">
    <source>
    </source>
</evidence>
<evidence type="ECO:0000305" key="7"/>
<evidence type="ECO:0000305" key="8">
    <source>
    </source>
</evidence>
<evidence type="ECO:0007829" key="9">
    <source>
        <dbReference type="PDB" id="5FL7"/>
    </source>
</evidence>
<keyword id="KW-0002">3D-structure</keyword>
<keyword id="KW-0066">ATP synthesis</keyword>
<keyword id="KW-0138">CF(0)</keyword>
<keyword id="KW-0903">Direct protein sequencing</keyword>
<keyword id="KW-0291">Formylation</keyword>
<keyword id="KW-0375">Hydrogen ion transport</keyword>
<keyword id="KW-0406">Ion transport</keyword>
<keyword id="KW-0446">Lipid-binding</keyword>
<keyword id="KW-0472">Membrane</keyword>
<keyword id="KW-0496">Mitochondrion</keyword>
<keyword id="KW-0999">Mitochondrion inner membrane</keyword>
<keyword id="KW-1185">Reference proteome</keyword>
<keyword id="KW-0812">Transmembrane</keyword>
<keyword id="KW-1133">Transmembrane helix</keyword>
<keyword id="KW-0813">Transport</keyword>
<dbReference type="EMBL" id="L15359">
    <property type="protein sequence ID" value="AAA78262.1"/>
    <property type="molecule type" value="Genomic_DNA"/>
</dbReference>
<dbReference type="EMBL" id="AJ307410">
    <property type="protein sequence ID" value="CAC28104.1"/>
    <property type="molecule type" value="Genomic_DNA"/>
</dbReference>
<dbReference type="PIR" id="S51504">
    <property type="entry name" value="S51504"/>
</dbReference>
<dbReference type="RefSeq" id="NP_075437.1">
    <property type="nucleotide sequence ID" value="NC_002659.1"/>
</dbReference>
<dbReference type="PDB" id="5FL7">
    <property type="method" value="X-ray"/>
    <property type="resolution" value="3.50 A"/>
    <property type="chains" value="K/L/M/N/O/P/Q/R/S/T=1-76"/>
</dbReference>
<dbReference type="PDBsum" id="5FL7"/>
<dbReference type="SMR" id="Q37695"/>
<dbReference type="FunCoup" id="Q37695">
    <property type="interactions" value="831"/>
</dbReference>
<dbReference type="STRING" id="284591.Q37695"/>
<dbReference type="GeneID" id="802622"/>
<dbReference type="KEGG" id="yli:802622"/>
<dbReference type="InParanoid" id="Q37695"/>
<dbReference type="Proteomes" id="UP000001300">
    <property type="component" value="Mitochondrion"/>
</dbReference>
<dbReference type="GO" id="GO:0005743">
    <property type="term" value="C:mitochondrial inner membrane"/>
    <property type="evidence" value="ECO:0007669"/>
    <property type="project" value="UniProtKB-SubCell"/>
</dbReference>
<dbReference type="GO" id="GO:0045259">
    <property type="term" value="C:proton-transporting ATP synthase complex"/>
    <property type="evidence" value="ECO:0007669"/>
    <property type="project" value="UniProtKB-KW"/>
</dbReference>
<dbReference type="GO" id="GO:0033177">
    <property type="term" value="C:proton-transporting two-sector ATPase complex, proton-transporting domain"/>
    <property type="evidence" value="ECO:0007669"/>
    <property type="project" value="InterPro"/>
</dbReference>
<dbReference type="GO" id="GO:0008289">
    <property type="term" value="F:lipid binding"/>
    <property type="evidence" value="ECO:0007669"/>
    <property type="project" value="UniProtKB-KW"/>
</dbReference>
<dbReference type="GO" id="GO:0015078">
    <property type="term" value="F:proton transmembrane transporter activity"/>
    <property type="evidence" value="ECO:0007669"/>
    <property type="project" value="InterPro"/>
</dbReference>
<dbReference type="GO" id="GO:0015986">
    <property type="term" value="P:proton motive force-driven ATP synthesis"/>
    <property type="evidence" value="ECO:0000318"/>
    <property type="project" value="GO_Central"/>
</dbReference>
<dbReference type="CDD" id="cd18182">
    <property type="entry name" value="ATP-synt_Fo_c_ATP5G3"/>
    <property type="match status" value="1"/>
</dbReference>
<dbReference type="FunFam" id="1.20.20.10:FF:000020">
    <property type="entry name" value="ATP synthase subunit 9, mitochondrial"/>
    <property type="match status" value="1"/>
</dbReference>
<dbReference type="Gene3D" id="1.20.20.10">
    <property type="entry name" value="F1F0 ATP synthase subunit C"/>
    <property type="match status" value="1"/>
</dbReference>
<dbReference type="HAMAP" id="MF_01396">
    <property type="entry name" value="ATP_synth_c_bact"/>
    <property type="match status" value="1"/>
</dbReference>
<dbReference type="InterPro" id="IPR000454">
    <property type="entry name" value="ATP_synth_F0_csu"/>
</dbReference>
<dbReference type="InterPro" id="IPR020537">
    <property type="entry name" value="ATP_synth_F0_csu_DDCD_BS"/>
</dbReference>
<dbReference type="InterPro" id="IPR038662">
    <property type="entry name" value="ATP_synth_F0_csu_sf"/>
</dbReference>
<dbReference type="InterPro" id="IPR002379">
    <property type="entry name" value="ATPase_proteolipid_c-like_dom"/>
</dbReference>
<dbReference type="InterPro" id="IPR035921">
    <property type="entry name" value="F/V-ATP_Csub_sf"/>
</dbReference>
<dbReference type="PANTHER" id="PTHR10031">
    <property type="entry name" value="ATP SYNTHASE LIPID-BINDING PROTEIN, MITOCHONDRIAL"/>
    <property type="match status" value="1"/>
</dbReference>
<dbReference type="PANTHER" id="PTHR10031:SF0">
    <property type="entry name" value="ATPASE PROTEIN 9"/>
    <property type="match status" value="1"/>
</dbReference>
<dbReference type="Pfam" id="PF00137">
    <property type="entry name" value="ATP-synt_C"/>
    <property type="match status" value="1"/>
</dbReference>
<dbReference type="PRINTS" id="PR00124">
    <property type="entry name" value="ATPASEC"/>
</dbReference>
<dbReference type="SUPFAM" id="SSF81333">
    <property type="entry name" value="F1F0 ATP synthase subunit C"/>
    <property type="match status" value="1"/>
</dbReference>
<dbReference type="PROSITE" id="PS00605">
    <property type="entry name" value="ATPASE_C"/>
    <property type="match status" value="1"/>
</dbReference>
<sequence>MQLVLAGKYIGAGLASIGLVGAGIGIAIVFAALINGVSRNPALKGQLFTYSILGFALSEATGLFALMIAFLLLYAV</sequence>
<reference key="1">
    <citation type="journal article" date="1994" name="Curr. Genet.">
        <title>Organization and transcription of the mitochondrial ATP synthase genes in the yeast Yarrowia lipolytica.</title>
        <authorList>
            <person name="Matsuoka M."/>
            <person name="Matsubara M."/>
            <person name="Inoue J."/>
            <person name="Kakehi M."/>
            <person name="Imanaka T."/>
        </authorList>
    </citation>
    <scope>NUCLEOTIDE SEQUENCE [GENOMIC DNA]</scope>
    <source>
        <strain>ATCC 44601 / 281</strain>
    </source>
</reference>
<reference key="2">
    <citation type="journal article" date="2001" name="Comp. Funct. Genomics">
        <title>The complete mitochondrial genome of Yarrowia lipolytica.</title>
        <authorList>
            <person name="Kerscher S."/>
            <person name="Durstewitz G."/>
            <person name="Casaregola S."/>
            <person name="Gaillardin C."/>
            <person name="Brandt U."/>
        </authorList>
    </citation>
    <scope>NUCLEOTIDE SEQUENCE [LARGE SCALE GENOMIC DNA]</scope>
    <source>
        <strain>ATCC 20460 / W29 / CBS 7504 / IFP29</strain>
    </source>
</reference>
<reference key="3">
    <citation type="journal article" date="2015" name="Biochem. J.">
        <title>The purification and characterization of ATP synthase complexes from the mitochondria of four fungal species.</title>
        <authorList>
            <person name="Liu S."/>
            <person name="Charlesworth T.J."/>
            <person name="Bason J.V."/>
            <person name="Montgomery M.G."/>
            <person name="Harbour M.E."/>
            <person name="Fearnley I.M."/>
            <person name="Walker J.E."/>
        </authorList>
    </citation>
    <scope>PROTEIN SEQUENCE OF 1-9</scope>
    <scope>IDENTIFICATION IN ATP SYNTHASE COMPLEX</scope>
    <scope>FUNCTION OF ATP SYNTHASE COMPLEX</scope>
    <scope>SUBUNIT</scope>
    <scope>SUBCELLULAR LOCATION</scope>
    <scope>MASS SPECTROMETRY</scope>
    <scope>IDENTIFICATION BY MASS SPECTROMETRY</scope>
    <scope>FORMYLATION AT MET-1</scope>
    <source>
        <strain evidence="6">CLIB 122 / E 150</strain>
    </source>
</reference>
<reference key="4">
    <citation type="journal article" date="2016" name="Mol. Cell">
        <title>Structure of a Complete ATP Synthase Dimer Reveals the Molecular Basis of Inner Mitochondrial Membrane Morphology.</title>
        <authorList>
            <person name="Hahn A."/>
            <person name="Parey K."/>
            <person name="Bublitz M."/>
            <person name="Mills D.J."/>
            <person name="Zickermann V."/>
            <person name="Vonck J."/>
            <person name="Kuehlbrandt W."/>
            <person name="Meier T."/>
        </authorList>
    </citation>
    <scope>X-RAY CRYSTALLOGRAPHY (3.5 ANGSTROMS) OF ATP SYNTHASE F1C10 COMPLEX</scope>
    <scope>STRUCTURE BY ELECTRON MICROSCOPY (7.7 ANGSTROMS) OF DIMERIC ATP SYNTHASE COMPLEX</scope>
    <scope>FUNCTION</scope>
    <scope>SUBUNIT</scope>
    <scope>SUBCELLULAR LOCATION</scope>
</reference>
<accession>Q37695</accession>
<comment type="function">
    <text evidence="3 4">Mitochondrial membrane ATP synthase (F(1)F(0) ATP synthase or Complex V) produces ATP from ADP in the presence of a proton gradient across the membrane which is generated by electron transport complexes of the respiratory chain (PubMed:25759169). F-type ATP synthases consist of two structural domains, F(1) - containing the extramembraneous catalytic core, and F(0) - containing the membrane proton channel, linked together by a central stalk and a peripheral stalk (PubMed:27373333). During catalysis, ATP synthesis in the catalytic domain of F(1) is coupled via a rotary mechanism of the central stalk subunits to proton translocation (PubMed:27373333). Part of the complex F(0) domain. A homomeric c-ring of 10 OLI1/ATP9 subunits is part of the complex rotary element (PubMed:27373333).</text>
</comment>
<comment type="subunit">
    <text evidence="3 4">F-type ATP synthases have 2 components, the catalytic core F(1) and the membrane-embedded component F(0), linked together by a central stalk and a peripheral stalk (PubMed:27373333). The central stalk, also called rotor shaft, is often seen as part of F(1) (PubMed:27373333). The peripheral stalk is seen as part of F(0) (PubMed:27373333). F(0) contains the membrane channel next to the rotor (PubMed:27373333). F-type ATP synthases form dimers but each monomer functions independently in ATP generation (PubMed:27373333). The dimer consists of 17 different polypeptides: ATP1 (subunit alpha, 3 molecules per monomer, part of F(1)), ATP2 (subunit beta, 3 copies per monomer, part of F(1)), ATP3 (subunit gamma, part of the central stalk), ATP4 (subunit b, part of the peripheral stalk), ATP5/OSCP (subunit 5/OSCP, part of the peripheral stalk), ATP6 (subunit a, part of the peripheral stalk), ATP7 (subunit d, part of the peripheral stalk), ATP8 (subunit 8, part of the peripheral stalk), OLI1 (subunit c, part of the rotor, 10 molecules per monomer), ATP14 (subunit h, part of the peripheral stalk), ATP15 (subunit epsilon, part of the central stalk), ATP16 (subunit delta, part of the central stalk), ATP17 (subunit f, part of the peripheral stalk), ATP18 (subunit i/j, part of the peripheral stalk), ATP19 (subunit k, dimer-specific, at interface between monomers), ATP20 (subunit g, at interface between monomers), TIM11 (subunit e, at interface between monomers) (PubMed:25759169, PubMed:27373333).</text>
</comment>
<comment type="subcellular location">
    <subcellularLocation>
        <location evidence="8">Mitochondrion inner membrane</location>
        <topology evidence="2">Multi-pass membrane protein</topology>
    </subcellularLocation>
    <text evidence="8">The F-type ATP synthase complex is anchored in the mitochondrial inner membrane via the F(0) domain with the F(1) domain and the peripheral stalk extending into the mitochondrial matrix.</text>
</comment>
<comment type="mass spectrometry"/>
<comment type="similarity">
    <text evidence="7">Belongs to the ATPase C chain family.</text>
</comment>
<gene>
    <name evidence="1" type="primary">OLI1</name>
    <name evidence="1" type="synonym">ATP9</name>
</gene>
<organism>
    <name type="scientific">Yarrowia lipolytica (strain CLIB 122 / E 150)</name>
    <name type="common">Yeast</name>
    <name type="synonym">Candida lipolytica</name>
    <dbReference type="NCBI Taxonomy" id="284591"/>
    <lineage>
        <taxon>Eukaryota</taxon>
        <taxon>Fungi</taxon>
        <taxon>Dikarya</taxon>
        <taxon>Ascomycota</taxon>
        <taxon>Saccharomycotina</taxon>
        <taxon>Dipodascomycetes</taxon>
        <taxon>Dipodascales</taxon>
        <taxon>Dipodascales incertae sedis</taxon>
        <taxon>Yarrowia</taxon>
    </lineage>
</organism>
<feature type="chain" id="PRO_0000112239" description="ATP synthase subunit 9, mitochondrial">
    <location>
        <begin position="1"/>
        <end position="76"/>
    </location>
</feature>
<feature type="transmembrane region" description="Helical" evidence="2">
    <location>
        <begin position="14"/>
        <end position="34"/>
    </location>
</feature>
<feature type="transmembrane region" description="Helical" evidence="2">
    <location>
        <begin position="52"/>
        <end position="72"/>
    </location>
</feature>
<feature type="site" description="Reversibly protonated during proton transport" evidence="8">
    <location>
        <position position="59"/>
    </location>
</feature>
<feature type="modified residue" description="N-formylmethionine" evidence="5">
    <location>
        <position position="1"/>
    </location>
</feature>
<feature type="helix" evidence="9">
    <location>
        <begin position="3"/>
        <end position="15"/>
    </location>
</feature>
<feature type="helix" evidence="9">
    <location>
        <begin position="16"/>
        <end position="18"/>
    </location>
</feature>
<feature type="helix" evidence="9">
    <location>
        <begin position="19"/>
        <end position="37"/>
    </location>
</feature>
<feature type="helix" evidence="9">
    <location>
        <begin position="41"/>
        <end position="43"/>
    </location>
</feature>
<feature type="helix" evidence="9">
    <location>
        <begin position="44"/>
        <end position="73"/>
    </location>
</feature>
<protein>
    <recommendedName>
        <fullName evidence="1">ATP synthase subunit 9, mitochondrial</fullName>
    </recommendedName>
    <alternativeName>
        <fullName evidence="6">ATP synthase subunit c</fullName>
    </alternativeName>
    <alternativeName>
        <fullName evidence="1">Lipid-binding protein</fullName>
    </alternativeName>
</protein>